<keyword id="KW-0030">Aminoacyl-tRNA synthetase</keyword>
<keyword id="KW-0067">ATP-binding</keyword>
<keyword id="KW-0963">Cytoplasm</keyword>
<keyword id="KW-0436">Ligase</keyword>
<keyword id="KW-0547">Nucleotide-binding</keyword>
<keyword id="KW-0648">Protein biosynthesis</keyword>
<keyword id="KW-1185">Reference proteome</keyword>
<sequence length="602" mass="66200">MFRQFRSEVADALGDALASLDLPTDDLGIERPPDDMDATLASSVAFRLAGEVGDAPPNVAATVADAVDVDGYDYLAAVDTAGPYVNFHPGERYFVDTLDASAVDSGYGALPDRDTSVVVEHTSANPTGPVHVGRARNPIVGDAVANLLEYAGYDVDRHYYVNDAGRQMAVFTWAYERFDESDLAGEPARARAEYDLVRYYRKGNAYLEEADPEAVEAAEEEIAAILQGLEAGDEETYERVGEVVDTVLGGMKECLARLPAEFDEFVKETRFMRDGSTDDIAARLKETDHAVYEEDAWQLELDDWGIDKNLVFLRSDDTSLYTTRDLAHHEWKFDNYDRAVTVLGEDHKLQADQLDATLELLGNDIDRLGHVIYSYVNLPDGKMSTRRGTGVMLDDLLDEAIDRAREAVETRMDDRIRDDDLTEEDVERIAHEVGIGAVRYDIVSKQPAKAITFEWEDALDFEGQSAPFVQYVHARCCGILDEAADAGIEVPGVTADSEGVVDVGALDVDATVFETDAARDLLREVARFPAAIESAADDLEPHTIATFTREFADAYNAFYRECPVVTSDDEELRAARVALVAAAKHTMANALDVLGVEAPESM</sequence>
<organism>
    <name type="scientific">Halorubrum lacusprofundi (strain ATCC 49239 / DSM 5036 / JCM 8891 / ACAM 34)</name>
    <dbReference type="NCBI Taxonomy" id="416348"/>
    <lineage>
        <taxon>Archaea</taxon>
        <taxon>Methanobacteriati</taxon>
        <taxon>Methanobacteriota</taxon>
        <taxon>Stenosarchaea group</taxon>
        <taxon>Halobacteria</taxon>
        <taxon>Halobacteriales</taxon>
        <taxon>Haloferacaceae</taxon>
        <taxon>Halorubrum</taxon>
    </lineage>
</organism>
<reference key="1">
    <citation type="journal article" date="2016" name="Stand. Genomic Sci.">
        <title>Complete genome sequence of the Antarctic Halorubrum lacusprofundi type strain ACAM 34.</title>
        <authorList>
            <person name="Anderson I.J."/>
            <person name="DasSarma P."/>
            <person name="Lucas S."/>
            <person name="Copeland A."/>
            <person name="Lapidus A."/>
            <person name="Del Rio T.G."/>
            <person name="Tice H."/>
            <person name="Dalin E."/>
            <person name="Bruce D.C."/>
            <person name="Goodwin L."/>
            <person name="Pitluck S."/>
            <person name="Sims D."/>
            <person name="Brettin T.S."/>
            <person name="Detter J.C."/>
            <person name="Han C.S."/>
            <person name="Larimer F."/>
            <person name="Hauser L."/>
            <person name="Land M."/>
            <person name="Ivanova N."/>
            <person name="Richardson P."/>
            <person name="Cavicchioli R."/>
            <person name="DasSarma S."/>
            <person name="Woese C.R."/>
            <person name="Kyrpides N.C."/>
        </authorList>
    </citation>
    <scope>NUCLEOTIDE SEQUENCE [LARGE SCALE GENOMIC DNA]</scope>
    <source>
        <strain>ATCC 49239 / DSM 5036 / JCM 8891 / ACAM 34</strain>
    </source>
</reference>
<gene>
    <name evidence="1" type="primary">argS</name>
    <name type="ordered locus">Hlac_0169</name>
</gene>
<comment type="catalytic activity">
    <reaction evidence="1">
        <text>tRNA(Arg) + L-arginine + ATP = L-arginyl-tRNA(Arg) + AMP + diphosphate</text>
        <dbReference type="Rhea" id="RHEA:20301"/>
        <dbReference type="Rhea" id="RHEA-COMP:9658"/>
        <dbReference type="Rhea" id="RHEA-COMP:9673"/>
        <dbReference type="ChEBI" id="CHEBI:30616"/>
        <dbReference type="ChEBI" id="CHEBI:32682"/>
        <dbReference type="ChEBI" id="CHEBI:33019"/>
        <dbReference type="ChEBI" id="CHEBI:78442"/>
        <dbReference type="ChEBI" id="CHEBI:78513"/>
        <dbReference type="ChEBI" id="CHEBI:456215"/>
        <dbReference type="EC" id="6.1.1.19"/>
    </reaction>
</comment>
<comment type="subcellular location">
    <subcellularLocation>
        <location evidence="1">Cytoplasm</location>
    </subcellularLocation>
</comment>
<comment type="similarity">
    <text evidence="1">Belongs to the class-I aminoacyl-tRNA synthetase family.</text>
</comment>
<proteinExistence type="inferred from homology"/>
<protein>
    <recommendedName>
        <fullName evidence="1">Arginine--tRNA ligase</fullName>
        <ecNumber evidence="1">6.1.1.19</ecNumber>
    </recommendedName>
    <alternativeName>
        <fullName evidence="1">Arginyl-tRNA synthetase</fullName>
        <shortName evidence="1">ArgRS</shortName>
    </alternativeName>
</protein>
<evidence type="ECO:0000255" key="1">
    <source>
        <dbReference type="HAMAP-Rule" id="MF_00123"/>
    </source>
</evidence>
<dbReference type="EC" id="6.1.1.19" evidence="1"/>
<dbReference type="EMBL" id="CP001365">
    <property type="protein sequence ID" value="ACM55774.1"/>
    <property type="molecule type" value="Genomic_DNA"/>
</dbReference>
<dbReference type="RefSeq" id="WP_012659416.1">
    <property type="nucleotide sequence ID" value="NC_012029.1"/>
</dbReference>
<dbReference type="SMR" id="B9LRF1"/>
<dbReference type="GeneID" id="7402098"/>
<dbReference type="KEGG" id="hla:Hlac_0169"/>
<dbReference type="eggNOG" id="arCOG00487">
    <property type="taxonomic scope" value="Archaea"/>
</dbReference>
<dbReference type="HOGENOM" id="CLU_006406_6_1_2"/>
<dbReference type="Proteomes" id="UP000000740">
    <property type="component" value="Chromosome 1"/>
</dbReference>
<dbReference type="GO" id="GO:0005737">
    <property type="term" value="C:cytoplasm"/>
    <property type="evidence" value="ECO:0007669"/>
    <property type="project" value="UniProtKB-SubCell"/>
</dbReference>
<dbReference type="GO" id="GO:0004814">
    <property type="term" value="F:arginine-tRNA ligase activity"/>
    <property type="evidence" value="ECO:0007669"/>
    <property type="project" value="UniProtKB-UniRule"/>
</dbReference>
<dbReference type="GO" id="GO:0005524">
    <property type="term" value="F:ATP binding"/>
    <property type="evidence" value="ECO:0007669"/>
    <property type="project" value="UniProtKB-UniRule"/>
</dbReference>
<dbReference type="GO" id="GO:0006420">
    <property type="term" value="P:arginyl-tRNA aminoacylation"/>
    <property type="evidence" value="ECO:0007669"/>
    <property type="project" value="UniProtKB-UniRule"/>
</dbReference>
<dbReference type="CDD" id="cd00671">
    <property type="entry name" value="ArgRS_core"/>
    <property type="match status" value="1"/>
</dbReference>
<dbReference type="Gene3D" id="3.30.1360.70">
    <property type="entry name" value="Arginyl tRNA synthetase N-terminal domain"/>
    <property type="match status" value="1"/>
</dbReference>
<dbReference type="Gene3D" id="3.40.50.620">
    <property type="entry name" value="HUPs"/>
    <property type="match status" value="1"/>
</dbReference>
<dbReference type="Gene3D" id="1.10.730.10">
    <property type="entry name" value="Isoleucyl-tRNA Synthetase, Domain 1"/>
    <property type="match status" value="1"/>
</dbReference>
<dbReference type="HAMAP" id="MF_00123">
    <property type="entry name" value="Arg_tRNA_synth"/>
    <property type="match status" value="1"/>
</dbReference>
<dbReference type="InterPro" id="IPR001278">
    <property type="entry name" value="Arg-tRNA-ligase"/>
</dbReference>
<dbReference type="InterPro" id="IPR005148">
    <property type="entry name" value="Arg-tRNA-synth_N"/>
</dbReference>
<dbReference type="InterPro" id="IPR036695">
    <property type="entry name" value="Arg-tRNA-synth_N_sf"/>
</dbReference>
<dbReference type="InterPro" id="IPR035684">
    <property type="entry name" value="ArgRS_core"/>
</dbReference>
<dbReference type="InterPro" id="IPR008909">
    <property type="entry name" value="DALR_anticod-bd"/>
</dbReference>
<dbReference type="InterPro" id="IPR014729">
    <property type="entry name" value="Rossmann-like_a/b/a_fold"/>
</dbReference>
<dbReference type="InterPro" id="IPR009080">
    <property type="entry name" value="tRNAsynth_Ia_anticodon-bd"/>
</dbReference>
<dbReference type="NCBIfam" id="TIGR00456">
    <property type="entry name" value="argS"/>
    <property type="match status" value="1"/>
</dbReference>
<dbReference type="PANTHER" id="PTHR11956:SF5">
    <property type="entry name" value="ARGININE--TRNA LIGASE, CYTOPLASMIC"/>
    <property type="match status" value="1"/>
</dbReference>
<dbReference type="PANTHER" id="PTHR11956">
    <property type="entry name" value="ARGINYL-TRNA SYNTHETASE"/>
    <property type="match status" value="1"/>
</dbReference>
<dbReference type="Pfam" id="PF03485">
    <property type="entry name" value="Arg_tRNA_synt_N"/>
    <property type="match status" value="1"/>
</dbReference>
<dbReference type="Pfam" id="PF05746">
    <property type="entry name" value="DALR_1"/>
    <property type="match status" value="1"/>
</dbReference>
<dbReference type="Pfam" id="PF00750">
    <property type="entry name" value="tRNA-synt_1d"/>
    <property type="match status" value="1"/>
</dbReference>
<dbReference type="PRINTS" id="PR01038">
    <property type="entry name" value="TRNASYNTHARG"/>
</dbReference>
<dbReference type="SMART" id="SM01016">
    <property type="entry name" value="Arg_tRNA_synt_N"/>
    <property type="match status" value="1"/>
</dbReference>
<dbReference type="SMART" id="SM00836">
    <property type="entry name" value="DALR_1"/>
    <property type="match status" value="1"/>
</dbReference>
<dbReference type="SUPFAM" id="SSF47323">
    <property type="entry name" value="Anticodon-binding domain of a subclass of class I aminoacyl-tRNA synthetases"/>
    <property type="match status" value="1"/>
</dbReference>
<dbReference type="SUPFAM" id="SSF55190">
    <property type="entry name" value="Arginyl-tRNA synthetase (ArgRS), N-terminal 'additional' domain"/>
    <property type="match status" value="1"/>
</dbReference>
<dbReference type="SUPFAM" id="SSF52374">
    <property type="entry name" value="Nucleotidylyl transferase"/>
    <property type="match status" value="1"/>
</dbReference>
<name>SYR_HALLT</name>
<feature type="chain" id="PRO_1000198942" description="Arginine--tRNA ligase">
    <location>
        <begin position="1"/>
        <end position="602"/>
    </location>
</feature>
<feature type="short sequence motif" description="'HIGH' region">
    <location>
        <begin position="124"/>
        <end position="134"/>
    </location>
</feature>
<accession>B9LRF1</accession>